<feature type="chain" id="PRO_0000443520" description="4-methyl-5-nitrocatechol 5-monooxygenase">
    <location>
        <begin position="1"/>
        <end position="548"/>
    </location>
</feature>
<feature type="mutagenesis site" description="Able to accept the two new substrates 4-nitrophenol (4NP) and 3-methyl-4-nitrophenol (3M4NP); when associated with I-380." evidence="1">
    <original>M</original>
    <variation>L</variation>
    <location>
        <position position="22"/>
    </location>
</feature>
<feature type="mutagenesis site" description="Able to accept the two new substrates 4-nitrophenol (4NP) and 3-methyl-4-nitrophenol (3M4NP); when associated with L-22." evidence="1">
    <original>L</original>
    <variation>I</variation>
    <location>
        <position position="380"/>
    </location>
</feature>
<feature type="sequence conflict" description="In Ref. 1; AAC44479." evidence="5" ref="1">
    <original>A</original>
    <variation>R</variation>
    <location>
        <position position="312"/>
    </location>
</feature>
<protein>
    <recommendedName>
        <fullName evidence="3">4-methyl-5-nitrocatechol 5-monooxygenase</fullName>
        <shortName evidence="3">4M5NC monooxygenase</shortName>
        <shortName evidence="4">MNC monooxygenase</shortName>
        <ecNumber evidence="1 2">1.14.13.210</ecNumber>
    </recommendedName>
    <alternativeName>
        <fullName evidence="4">4-methyl-5-nitrocatechol oxygenase</fullName>
    </alternativeName>
</protein>
<gene>
    <name evidence="4" type="primary">dntB</name>
</gene>
<name>DNTB_BURSP</name>
<reference key="1">
    <citation type="journal article" date="1996" name="J. Bacteriol.">
        <title>Purification and sequence analysis of 4-methyl-5-nitrocatechol oxygenase from Burkholderia sp. strain DNT.</title>
        <authorList>
            <person name="Haigler B.E."/>
            <person name="Suen W.C."/>
            <person name="Spain J.C."/>
        </authorList>
    </citation>
    <scope>NUCLEOTIDE SEQUENCE [GENOMIC DNA]</scope>
    <scope>FUNCTION</scope>
    <scope>CATALYTIC ACTIVITY</scope>
    <scope>BIOPHYSICOCHEMICAL PROPERTIES</scope>
    <scope>ACTIVITY REGULATION</scope>
    <scope>COFACTOR</scope>
    <scope>SUBUNIT</scope>
    <source>
        <strain evidence="6">DNT</strain>
    </source>
</reference>
<reference key="2">
    <citation type="journal article" date="2006" name="Appl. Environ. Microbiol.">
        <title>Protein engineering of the 4-methyl-5-nitrocatechol monooxygenase from Burkholderia sp. strain DNT for enhanced degradation of nitroaromatics.</title>
        <authorList>
            <person name="Leungsakul T."/>
            <person name="Johnson G.R."/>
            <person name="Wood T.K."/>
        </authorList>
    </citation>
    <scope>NUCLEOTIDE SEQUENCE [GENOMIC DNA]</scope>
    <scope>FUNCTION</scope>
    <scope>CATALYTIC ACTIVITY</scope>
    <scope>BIOPHYSICOCHEMICAL PROPERTIES</scope>
    <scope>MUTAGENESIS OF MET-22 AND LEU-380</scope>
    <source>
        <strain evidence="7">DNT</strain>
    </source>
</reference>
<accession>Q2PWU9</accession>
<accession>P71029</accession>
<evidence type="ECO:0000269" key="1">
    <source>
    </source>
</evidence>
<evidence type="ECO:0000269" key="2">
    <source>
    </source>
</evidence>
<evidence type="ECO:0000303" key="3">
    <source>
    </source>
</evidence>
<evidence type="ECO:0000303" key="4">
    <source>
    </source>
</evidence>
<evidence type="ECO:0000305" key="5"/>
<evidence type="ECO:0000312" key="6">
    <source>
        <dbReference type="EMBL" id="AAC44479.1"/>
    </source>
</evidence>
<evidence type="ECO:0000312" key="7">
    <source>
        <dbReference type="EMBL" id="ABC00744.1"/>
    </source>
</evidence>
<keyword id="KW-0058">Aromatic hydrocarbons catabolism</keyword>
<keyword id="KW-0274">FAD</keyword>
<keyword id="KW-0285">Flavoprotein</keyword>
<keyword id="KW-0503">Monooxygenase</keyword>
<keyword id="KW-0520">NAD</keyword>
<keyword id="KW-0521">NADP</keyword>
<keyword id="KW-0560">Oxidoreductase</keyword>
<dbReference type="EC" id="1.14.13.210" evidence="1 2"/>
<dbReference type="EMBL" id="U68411">
    <property type="protein sequence ID" value="AAC44479.1"/>
    <property type="molecule type" value="Genomic_DNA"/>
</dbReference>
<dbReference type="EMBL" id="DQ298257">
    <property type="protein sequence ID" value="ABC00744.1"/>
    <property type="molecule type" value="Genomic_DNA"/>
</dbReference>
<dbReference type="SMR" id="Q2PWU9"/>
<dbReference type="KEGG" id="ag:AAC44479"/>
<dbReference type="KEGG" id="ag:ABC00744"/>
<dbReference type="BioCyc" id="MetaCyc:MONOMER-13337"/>
<dbReference type="BRENDA" id="1.14.13.210">
    <property type="organism ID" value="1033"/>
</dbReference>
<dbReference type="GO" id="GO:0071949">
    <property type="term" value="F:FAD binding"/>
    <property type="evidence" value="ECO:0007669"/>
    <property type="project" value="InterPro"/>
</dbReference>
<dbReference type="GO" id="GO:0016709">
    <property type="term" value="F:oxidoreductase activity, acting on paired donors, with incorporation or reduction of molecular oxygen, NAD(P)H as one donor, and incorporation of one atom of oxygen"/>
    <property type="evidence" value="ECO:0007669"/>
    <property type="project" value="UniProtKB-ARBA"/>
</dbReference>
<dbReference type="GO" id="GO:0009056">
    <property type="term" value="P:catabolic process"/>
    <property type="evidence" value="ECO:0007669"/>
    <property type="project" value="UniProtKB-KW"/>
</dbReference>
<dbReference type="Gene3D" id="3.40.30.120">
    <property type="match status" value="1"/>
</dbReference>
<dbReference type="Gene3D" id="3.30.9.10">
    <property type="entry name" value="D-Amino Acid Oxidase, subunit A, domain 2"/>
    <property type="match status" value="1"/>
</dbReference>
<dbReference type="Gene3D" id="3.50.50.60">
    <property type="entry name" value="FAD/NAD(P)-binding domain"/>
    <property type="match status" value="1"/>
</dbReference>
<dbReference type="InterPro" id="IPR002938">
    <property type="entry name" value="FAD-bd"/>
</dbReference>
<dbReference type="InterPro" id="IPR036188">
    <property type="entry name" value="FAD/NAD-bd_sf"/>
</dbReference>
<dbReference type="InterPro" id="IPR050641">
    <property type="entry name" value="RIFMO-like"/>
</dbReference>
<dbReference type="PANTHER" id="PTHR43004:SF19">
    <property type="entry name" value="BINDING MONOOXYGENASE, PUTATIVE (JCVI)-RELATED"/>
    <property type="match status" value="1"/>
</dbReference>
<dbReference type="PANTHER" id="PTHR43004">
    <property type="entry name" value="TRK SYSTEM POTASSIUM UPTAKE PROTEIN"/>
    <property type="match status" value="1"/>
</dbReference>
<dbReference type="Pfam" id="PF01494">
    <property type="entry name" value="FAD_binding_3"/>
    <property type="match status" value="1"/>
</dbReference>
<dbReference type="Pfam" id="PF21274">
    <property type="entry name" value="Rng_hyd_C"/>
    <property type="match status" value="1"/>
</dbReference>
<dbReference type="PRINTS" id="PR00420">
    <property type="entry name" value="RNGMNOXGNASE"/>
</dbReference>
<dbReference type="SUPFAM" id="SSF51905">
    <property type="entry name" value="FAD/NAD(P)-binding domain"/>
    <property type="match status" value="1"/>
</dbReference>
<comment type="function">
    <text evidence="1 2">Involved in the degradation of 2,4-dinitrotoluene (2,4-DNT). Catalyzes the removal of the nitro group from 4-methyl-5-nitrocatechol (MNC) to yield 2-hydroxy-5-methylquinone (PubMed:16751499, PubMed:8830701). It can use both NADH and NADPH as electron donors, but prefers NADPH (PubMed:8830701). Also able to use 4-nitrocatechol as substrate (PubMed:8830701).</text>
</comment>
<comment type="catalytic activity">
    <reaction evidence="1 2">
        <text>4-methyl-5-nitrocatechol + NADPH + O2 = 2-hydroxy-5-methylquinone + nitrite + NADP(+) + H2O + H(+)</text>
        <dbReference type="Rhea" id="RHEA:48012"/>
        <dbReference type="ChEBI" id="CHEBI:15377"/>
        <dbReference type="ChEBI" id="CHEBI:15378"/>
        <dbReference type="ChEBI" id="CHEBI:15379"/>
        <dbReference type="ChEBI" id="CHEBI:16301"/>
        <dbReference type="ChEBI" id="CHEBI:57783"/>
        <dbReference type="ChEBI" id="CHEBI:58349"/>
        <dbReference type="ChEBI" id="CHEBI:81666"/>
        <dbReference type="ChEBI" id="CHEBI:88190"/>
        <dbReference type="EC" id="1.14.13.210"/>
    </reaction>
</comment>
<comment type="catalytic activity">
    <reaction evidence="1 2">
        <text>4-methyl-5-nitrocatechol + NADH + O2 = 2-hydroxy-5-methylquinone + nitrite + NAD(+) + H2O + H(+)</text>
        <dbReference type="Rhea" id="RHEA:48016"/>
        <dbReference type="ChEBI" id="CHEBI:15377"/>
        <dbReference type="ChEBI" id="CHEBI:15378"/>
        <dbReference type="ChEBI" id="CHEBI:15379"/>
        <dbReference type="ChEBI" id="CHEBI:16301"/>
        <dbReference type="ChEBI" id="CHEBI:57540"/>
        <dbReference type="ChEBI" id="CHEBI:57945"/>
        <dbReference type="ChEBI" id="CHEBI:81666"/>
        <dbReference type="ChEBI" id="CHEBI:88190"/>
        <dbReference type="EC" id="1.14.13.210"/>
    </reaction>
</comment>
<comment type="cofactor">
    <cofactor evidence="2">
        <name>FAD</name>
        <dbReference type="ChEBI" id="CHEBI:57692"/>
    </cofactor>
    <text evidence="2">Binds 1 FAD per subunit.</text>
</comment>
<comment type="activity regulation">
    <text evidence="2">Activated by magnesium or manganese ions. Inhibited by concentrations of 4-methyl-5-nitrocatechol (MNC) above 2 mM.</text>
</comment>
<comment type="biophysicochemical properties">
    <kinetics>
        <KM evidence="2">15.5 uM for NADPH</KM>
        <KM evidence="2">50 uM for oxygen</KM>
        <KM evidence="1">350 uM for 4-nitrophenol (4NP)</KM>
        <KM evidence="2">1220 uM for NADH</KM>
        <Vmax evidence="1">14.0 nmol/min/mg enzyme with 4-nitrophenol (4NP) as substrate</Vmax>
        <text evidence="1">kcat is 0.014 sec(-1) with 4-nitrophenol (4NP) as substrate.</text>
    </kinetics>
</comment>
<comment type="subunit">
    <text evidence="2">Monomer.</text>
</comment>
<comment type="similarity">
    <text evidence="5">Belongs to the PheA/TfdB FAD monooxygenase family.</text>
</comment>
<organism>
    <name type="scientific">Burkholderia sp</name>
    <dbReference type="NCBI Taxonomy" id="36773"/>
    <lineage>
        <taxon>Bacteria</taxon>
        <taxon>Pseudomonadati</taxon>
        <taxon>Pseudomonadota</taxon>
        <taxon>Betaproteobacteria</taxon>
        <taxon>Burkholderiales</taxon>
        <taxon>Burkholderiaceae</taxon>
        <taxon>Burkholderia</taxon>
    </lineage>
</organism>
<proteinExistence type="evidence at protein level"/>
<sequence>MTRPLETPPDIEVPVLIVGGSMVGLSTALFLSHYGIQAMAVERHERTAIHPRAGHFHLRTLELLRSVGLEEVVARTSAEAFFPNGGINAVQSLAGGETASFISNLNAGVEEFSPTRRLFIAQQALEPILRSRAEELGADLRYSTEVVSVVDDGEGVTTVIRDKASGQERTVRSRYLVASDGWRSQRRAQLGIETRGQGLLSRSATIYFRADCRELLAGTHLGVIYVLNERLRGFFRFEKSLQSGFLGVATLGDPTRPGALDVSAGFTTDTAVELVRAAIGVPDIDVEIQDVAHWEATAALADRYRGGRIFLAGDAAHVVPPYGGFGGNTGVQDAHNLASKLALVLDGTAGEALLDTYEAERRPVGALTVDQAFSRYIRRLAPEFLDEQTPELVDDFSMELGYRYHSPAVLTEDDDKAVDQAVVGHPREALGRPGSRAPHVALRVDDHDRSVLDLLGRDFVVLAGPAGQVWAEAAERASKELGLPLSAYVVGSDTPVADVEGRFADAYGLSDAGVALVRPDGFIAWRSRDLAEDPEAALTDALRAVLCR</sequence>